<reference key="1">
    <citation type="submission" date="2007-05" db="EMBL/GenBank/DDBJ databases">
        <title>Complete sequence of Pseudomonas putida F1.</title>
        <authorList>
            <consortium name="US DOE Joint Genome Institute"/>
            <person name="Copeland A."/>
            <person name="Lucas S."/>
            <person name="Lapidus A."/>
            <person name="Barry K."/>
            <person name="Detter J.C."/>
            <person name="Glavina del Rio T."/>
            <person name="Hammon N."/>
            <person name="Israni S."/>
            <person name="Dalin E."/>
            <person name="Tice H."/>
            <person name="Pitluck S."/>
            <person name="Chain P."/>
            <person name="Malfatti S."/>
            <person name="Shin M."/>
            <person name="Vergez L."/>
            <person name="Schmutz J."/>
            <person name="Larimer F."/>
            <person name="Land M."/>
            <person name="Hauser L."/>
            <person name="Kyrpides N."/>
            <person name="Lykidis A."/>
            <person name="Parales R."/>
            <person name="Richardson P."/>
        </authorList>
    </citation>
    <scope>NUCLEOTIDE SEQUENCE [LARGE SCALE GENOMIC DNA]</scope>
    <source>
        <strain>ATCC 700007 / DSM 6899 / JCM 31910 / BCRC 17059 / LMG 24140 / F1</strain>
    </source>
</reference>
<gene>
    <name evidence="1" type="primary">aroK</name>
    <name type="ordered locus">Pput_4952</name>
</gene>
<keyword id="KW-0028">Amino-acid biosynthesis</keyword>
<keyword id="KW-0057">Aromatic amino acid biosynthesis</keyword>
<keyword id="KW-0067">ATP-binding</keyword>
<keyword id="KW-0963">Cytoplasm</keyword>
<keyword id="KW-0418">Kinase</keyword>
<keyword id="KW-0460">Magnesium</keyword>
<keyword id="KW-0479">Metal-binding</keyword>
<keyword id="KW-0547">Nucleotide-binding</keyword>
<keyword id="KW-0808">Transferase</keyword>
<name>AROK_PSEP1</name>
<organism>
    <name type="scientific">Pseudomonas putida (strain ATCC 700007 / DSM 6899 / JCM 31910 / BCRC 17059 / LMG 24140 / F1)</name>
    <dbReference type="NCBI Taxonomy" id="351746"/>
    <lineage>
        <taxon>Bacteria</taxon>
        <taxon>Pseudomonadati</taxon>
        <taxon>Pseudomonadota</taxon>
        <taxon>Gammaproteobacteria</taxon>
        <taxon>Pseudomonadales</taxon>
        <taxon>Pseudomonadaceae</taxon>
        <taxon>Pseudomonas</taxon>
    </lineage>
</organism>
<proteinExistence type="inferred from homology"/>
<evidence type="ECO:0000255" key="1">
    <source>
        <dbReference type="HAMAP-Rule" id="MF_00109"/>
    </source>
</evidence>
<comment type="function">
    <text evidence="1">Catalyzes the specific phosphorylation of the 3-hydroxyl group of shikimic acid using ATP as a cosubstrate.</text>
</comment>
<comment type="catalytic activity">
    <reaction evidence="1">
        <text>shikimate + ATP = 3-phosphoshikimate + ADP + H(+)</text>
        <dbReference type="Rhea" id="RHEA:13121"/>
        <dbReference type="ChEBI" id="CHEBI:15378"/>
        <dbReference type="ChEBI" id="CHEBI:30616"/>
        <dbReference type="ChEBI" id="CHEBI:36208"/>
        <dbReference type="ChEBI" id="CHEBI:145989"/>
        <dbReference type="ChEBI" id="CHEBI:456216"/>
        <dbReference type="EC" id="2.7.1.71"/>
    </reaction>
</comment>
<comment type="cofactor">
    <cofactor evidence="1">
        <name>Mg(2+)</name>
        <dbReference type="ChEBI" id="CHEBI:18420"/>
    </cofactor>
    <text evidence="1">Binds 1 Mg(2+) ion per subunit.</text>
</comment>
<comment type="pathway">
    <text evidence="1">Metabolic intermediate biosynthesis; chorismate biosynthesis; chorismate from D-erythrose 4-phosphate and phosphoenolpyruvate: step 5/7.</text>
</comment>
<comment type="subunit">
    <text evidence="1">Monomer.</text>
</comment>
<comment type="subcellular location">
    <subcellularLocation>
        <location evidence="1">Cytoplasm</location>
    </subcellularLocation>
</comment>
<comment type="similarity">
    <text evidence="1">Belongs to the shikimate kinase family.</text>
</comment>
<accession>A5WAB2</accession>
<sequence length="172" mass="19315">MRNLILVGPMGAGKSTIGRLLAKELRLLFKDSDKEIELRCGANIPWIFDKEGEPGFRDREQAMIAELCALDGVVLATGGGAVMREANRQALHQGGRVIYLHASVEQQVGRTARDRNRPLLRTANPEATLRTLLETRDPLYREIADLVVETDERPPRMVVIDILERLQQLPPR</sequence>
<dbReference type="EC" id="2.7.1.71" evidence="1"/>
<dbReference type="EMBL" id="CP000712">
    <property type="protein sequence ID" value="ABQ81072.1"/>
    <property type="molecule type" value="Genomic_DNA"/>
</dbReference>
<dbReference type="SMR" id="A5WAB2"/>
<dbReference type="KEGG" id="ppf:Pput_4952"/>
<dbReference type="eggNOG" id="COG0703">
    <property type="taxonomic scope" value="Bacteria"/>
</dbReference>
<dbReference type="HOGENOM" id="CLU_057607_2_2_6"/>
<dbReference type="UniPathway" id="UPA00053">
    <property type="reaction ID" value="UER00088"/>
</dbReference>
<dbReference type="GO" id="GO:0005829">
    <property type="term" value="C:cytosol"/>
    <property type="evidence" value="ECO:0007669"/>
    <property type="project" value="TreeGrafter"/>
</dbReference>
<dbReference type="GO" id="GO:0005524">
    <property type="term" value="F:ATP binding"/>
    <property type="evidence" value="ECO:0007669"/>
    <property type="project" value="UniProtKB-UniRule"/>
</dbReference>
<dbReference type="GO" id="GO:0000287">
    <property type="term" value="F:magnesium ion binding"/>
    <property type="evidence" value="ECO:0007669"/>
    <property type="project" value="UniProtKB-UniRule"/>
</dbReference>
<dbReference type="GO" id="GO:0004765">
    <property type="term" value="F:shikimate kinase activity"/>
    <property type="evidence" value="ECO:0007669"/>
    <property type="project" value="UniProtKB-UniRule"/>
</dbReference>
<dbReference type="GO" id="GO:0008652">
    <property type="term" value="P:amino acid biosynthetic process"/>
    <property type="evidence" value="ECO:0007669"/>
    <property type="project" value="UniProtKB-KW"/>
</dbReference>
<dbReference type="GO" id="GO:0009073">
    <property type="term" value="P:aromatic amino acid family biosynthetic process"/>
    <property type="evidence" value="ECO:0007669"/>
    <property type="project" value="UniProtKB-KW"/>
</dbReference>
<dbReference type="GO" id="GO:0009423">
    <property type="term" value="P:chorismate biosynthetic process"/>
    <property type="evidence" value="ECO:0007669"/>
    <property type="project" value="UniProtKB-UniRule"/>
</dbReference>
<dbReference type="CDD" id="cd00464">
    <property type="entry name" value="SK"/>
    <property type="match status" value="1"/>
</dbReference>
<dbReference type="Gene3D" id="3.40.50.300">
    <property type="entry name" value="P-loop containing nucleotide triphosphate hydrolases"/>
    <property type="match status" value="1"/>
</dbReference>
<dbReference type="HAMAP" id="MF_00109">
    <property type="entry name" value="Shikimate_kinase"/>
    <property type="match status" value="1"/>
</dbReference>
<dbReference type="InterPro" id="IPR027417">
    <property type="entry name" value="P-loop_NTPase"/>
</dbReference>
<dbReference type="InterPro" id="IPR031322">
    <property type="entry name" value="Shikimate/glucono_kinase"/>
</dbReference>
<dbReference type="InterPro" id="IPR000623">
    <property type="entry name" value="Shikimate_kinase/TSH1"/>
</dbReference>
<dbReference type="InterPro" id="IPR023000">
    <property type="entry name" value="Shikimate_kinase_CS"/>
</dbReference>
<dbReference type="NCBIfam" id="NF003456">
    <property type="entry name" value="PRK05057.1"/>
    <property type="match status" value="1"/>
</dbReference>
<dbReference type="PANTHER" id="PTHR21087">
    <property type="entry name" value="SHIKIMATE KINASE"/>
    <property type="match status" value="1"/>
</dbReference>
<dbReference type="PANTHER" id="PTHR21087:SF16">
    <property type="entry name" value="SHIKIMATE KINASE 1, CHLOROPLASTIC"/>
    <property type="match status" value="1"/>
</dbReference>
<dbReference type="Pfam" id="PF01202">
    <property type="entry name" value="SKI"/>
    <property type="match status" value="1"/>
</dbReference>
<dbReference type="PRINTS" id="PR01100">
    <property type="entry name" value="SHIKIMTKNASE"/>
</dbReference>
<dbReference type="SUPFAM" id="SSF52540">
    <property type="entry name" value="P-loop containing nucleoside triphosphate hydrolases"/>
    <property type="match status" value="1"/>
</dbReference>
<dbReference type="PROSITE" id="PS01128">
    <property type="entry name" value="SHIKIMATE_KINASE"/>
    <property type="match status" value="1"/>
</dbReference>
<feature type="chain" id="PRO_1000022988" description="Shikimate kinase">
    <location>
        <begin position="1"/>
        <end position="172"/>
    </location>
</feature>
<feature type="binding site" evidence="1">
    <location>
        <begin position="11"/>
        <end position="16"/>
    </location>
    <ligand>
        <name>ATP</name>
        <dbReference type="ChEBI" id="CHEBI:30616"/>
    </ligand>
</feature>
<feature type="binding site" evidence="1">
    <location>
        <position position="15"/>
    </location>
    <ligand>
        <name>Mg(2+)</name>
        <dbReference type="ChEBI" id="CHEBI:18420"/>
    </ligand>
</feature>
<feature type="binding site" evidence="1">
    <location>
        <position position="33"/>
    </location>
    <ligand>
        <name>substrate</name>
    </ligand>
</feature>
<feature type="binding site" evidence="1">
    <location>
        <position position="57"/>
    </location>
    <ligand>
        <name>substrate</name>
    </ligand>
</feature>
<feature type="binding site" evidence="1">
    <location>
        <position position="79"/>
    </location>
    <ligand>
        <name>substrate</name>
    </ligand>
</feature>
<feature type="binding site" evidence="1">
    <location>
        <position position="117"/>
    </location>
    <ligand>
        <name>ATP</name>
        <dbReference type="ChEBI" id="CHEBI:30616"/>
    </ligand>
</feature>
<feature type="binding site" evidence="1">
    <location>
        <position position="136"/>
    </location>
    <ligand>
        <name>substrate</name>
    </ligand>
</feature>
<feature type="binding site" evidence="1">
    <location>
        <position position="153"/>
    </location>
    <ligand>
        <name>ATP</name>
        <dbReference type="ChEBI" id="CHEBI:30616"/>
    </ligand>
</feature>
<protein>
    <recommendedName>
        <fullName evidence="1">Shikimate kinase</fullName>
        <shortName evidence="1">SK</shortName>
        <ecNumber evidence="1">2.7.1.71</ecNumber>
    </recommendedName>
</protein>